<name>Y1324_SODGM</name>
<feature type="chain" id="PRO_1000149759" description="UPF0266 membrane protein SG1324">
    <location>
        <begin position="1"/>
        <end position="153"/>
    </location>
</feature>
<feature type="transmembrane region" description="Helical" evidence="1">
    <location>
        <begin position="6"/>
        <end position="26"/>
    </location>
</feature>
<feature type="transmembrane region" description="Helical" evidence="1">
    <location>
        <begin position="46"/>
        <end position="66"/>
    </location>
</feature>
<feature type="transmembrane region" description="Helical" evidence="1">
    <location>
        <begin position="68"/>
        <end position="88"/>
    </location>
</feature>
<reference key="1">
    <citation type="journal article" date="2006" name="Genome Res.">
        <title>Massive genome erosion and functional adaptations provide insights into the symbiotic lifestyle of Sodalis glossinidius in the tsetse host.</title>
        <authorList>
            <person name="Toh H."/>
            <person name="Weiss B.L."/>
            <person name="Perkin S.A.H."/>
            <person name="Yamashita A."/>
            <person name="Oshima K."/>
            <person name="Hattori M."/>
            <person name="Aksoy S."/>
        </authorList>
    </citation>
    <scope>NUCLEOTIDE SEQUENCE [LARGE SCALE GENOMIC DNA]</scope>
    <source>
        <strain>morsitans</strain>
    </source>
</reference>
<comment type="subcellular location">
    <subcellularLocation>
        <location evidence="1">Cell inner membrane</location>
        <topology evidence="1">Multi-pass membrane protein</topology>
    </subcellularLocation>
</comment>
<comment type="similarity">
    <text evidence="1">Belongs to the UPF0266 family.</text>
</comment>
<proteinExistence type="inferred from homology"/>
<gene>
    <name type="ordered locus">SG1324</name>
</gene>
<organism>
    <name type="scientific">Sodalis glossinidius (strain morsitans)</name>
    <dbReference type="NCBI Taxonomy" id="343509"/>
    <lineage>
        <taxon>Bacteria</taxon>
        <taxon>Pseudomonadati</taxon>
        <taxon>Pseudomonadota</taxon>
        <taxon>Gammaproteobacteria</taxon>
        <taxon>Enterobacterales</taxon>
        <taxon>Bruguierivoracaceae</taxon>
        <taxon>Sodalis</taxon>
    </lineage>
</organism>
<accession>Q2NTC6</accession>
<keyword id="KW-0997">Cell inner membrane</keyword>
<keyword id="KW-1003">Cell membrane</keyword>
<keyword id="KW-0472">Membrane</keyword>
<keyword id="KW-0812">Transmembrane</keyword>
<keyword id="KW-1133">Transmembrane helix</keyword>
<sequence>MTVTDIGLVIMIVIALLFAVFDEFIVDYALRGKTRLRVPLRRQGRLDGLIFIVLLLILLYKNITTDGKVMTSTLILFLGLMVIYLAYIRCPRMLFKTEGFFYGNVFINYSRIKNMNLSEDGYLVIDLEKRSLLIQVNKLDDLQKIYHLLIEIQ</sequence>
<evidence type="ECO:0000255" key="1">
    <source>
        <dbReference type="HAMAP-Rule" id="MF_01071"/>
    </source>
</evidence>
<dbReference type="EMBL" id="AP008232">
    <property type="protein sequence ID" value="BAE74599.1"/>
    <property type="molecule type" value="Genomic_DNA"/>
</dbReference>
<dbReference type="RefSeq" id="WP_011411152.1">
    <property type="nucleotide sequence ID" value="NC_007712.1"/>
</dbReference>
<dbReference type="STRING" id="343509.SG1324"/>
<dbReference type="KEGG" id="sgl:SG1324"/>
<dbReference type="eggNOG" id="COG4811">
    <property type="taxonomic scope" value="Bacteria"/>
</dbReference>
<dbReference type="HOGENOM" id="CLU_133645_0_0_6"/>
<dbReference type="OrthoDB" id="2360740at2"/>
<dbReference type="Proteomes" id="UP000001932">
    <property type="component" value="Chromosome"/>
</dbReference>
<dbReference type="GO" id="GO:0005886">
    <property type="term" value="C:plasma membrane"/>
    <property type="evidence" value="ECO:0007669"/>
    <property type="project" value="UniProtKB-SubCell"/>
</dbReference>
<dbReference type="HAMAP" id="MF_01071">
    <property type="entry name" value="UPF0266"/>
    <property type="match status" value="1"/>
</dbReference>
<dbReference type="InterPro" id="IPR009328">
    <property type="entry name" value="DUF986"/>
</dbReference>
<dbReference type="NCBIfam" id="NF002791">
    <property type="entry name" value="PRK02913.1"/>
    <property type="match status" value="1"/>
</dbReference>
<dbReference type="Pfam" id="PF06173">
    <property type="entry name" value="DUF986"/>
    <property type="match status" value="1"/>
</dbReference>
<dbReference type="PIRSF" id="PIRSF020687">
    <property type="entry name" value="UCP020687"/>
    <property type="match status" value="1"/>
</dbReference>
<protein>
    <recommendedName>
        <fullName evidence="1">UPF0266 membrane protein SG1324</fullName>
    </recommendedName>
</protein>